<proteinExistence type="evidence at transcript level"/>
<feature type="chain" id="PRO_0000282712" description="Nucleolar RNA helicase 2">
    <location>
        <begin position="1"/>
        <end position="782"/>
    </location>
</feature>
<feature type="domain" description="Helicase ATP-binding" evidence="4">
    <location>
        <begin position="213"/>
        <end position="392"/>
    </location>
</feature>
<feature type="domain" description="Helicase C-terminal" evidence="5">
    <location>
        <begin position="425"/>
        <end position="569"/>
    </location>
</feature>
<feature type="repeat" description="1">
    <location>
        <begin position="720"/>
        <end position="724"/>
    </location>
</feature>
<feature type="repeat" description="2">
    <location>
        <begin position="731"/>
        <end position="735"/>
    </location>
</feature>
<feature type="repeat" description="3">
    <location>
        <begin position="741"/>
        <end position="747"/>
    </location>
</feature>
<feature type="region of interest" description="Disordered" evidence="7">
    <location>
        <begin position="1"/>
        <end position="184"/>
    </location>
</feature>
<feature type="region of interest" description="Disordered" evidence="7">
    <location>
        <begin position="704"/>
        <end position="782"/>
    </location>
</feature>
<feature type="region of interest" description="3 X 5 AA repeats">
    <location>
        <begin position="720"/>
        <end position="747"/>
    </location>
</feature>
<feature type="short sequence motif" description="Q motif" evidence="6">
    <location>
        <begin position="182"/>
        <end position="210"/>
    </location>
</feature>
<feature type="short sequence motif" description="DEAD box" evidence="4">
    <location>
        <begin position="335"/>
        <end position="338"/>
    </location>
</feature>
<feature type="compositionally biased region" description="Basic and acidic residues" evidence="7">
    <location>
        <begin position="26"/>
        <end position="42"/>
    </location>
</feature>
<feature type="compositionally biased region" description="Basic and acidic residues" evidence="7">
    <location>
        <begin position="99"/>
        <end position="117"/>
    </location>
</feature>
<feature type="compositionally biased region" description="Basic and acidic residues" evidence="7">
    <location>
        <begin position="134"/>
        <end position="143"/>
    </location>
</feature>
<feature type="compositionally biased region" description="Basic and acidic residues" evidence="7">
    <location>
        <begin position="172"/>
        <end position="181"/>
    </location>
</feature>
<feature type="compositionally biased region" description="Low complexity" evidence="7">
    <location>
        <begin position="728"/>
        <end position="756"/>
    </location>
</feature>
<feature type="binding site" evidence="4">
    <location>
        <begin position="226"/>
        <end position="233"/>
    </location>
    <ligand>
        <name>ATP</name>
        <dbReference type="ChEBI" id="CHEBI:30616"/>
    </ligand>
</feature>
<feature type="modified residue" description="Phosphoserine" evidence="3">
    <location>
        <position position="7"/>
    </location>
</feature>
<feature type="modified residue" description="Phosphoserine" evidence="3">
    <location>
        <position position="13"/>
    </location>
</feature>
<feature type="modified residue" description="N6-acetyllysine" evidence="2">
    <location>
        <position position="39"/>
    </location>
</feature>
<feature type="modified residue" description="Phosphoserine" evidence="3">
    <location>
        <position position="119"/>
    </location>
</feature>
<feature type="modified residue" description="N6-acetyllysine" evidence="3">
    <location>
        <position position="135"/>
    </location>
</feature>
<feature type="modified residue" description="Phosphoserine" evidence="2">
    <location>
        <position position="145"/>
    </location>
</feature>
<feature type="modified residue" description="Phosphoserine" evidence="2">
    <location>
        <position position="169"/>
    </location>
</feature>
<feature type="modified residue" description="Phosphothreonine" evidence="3">
    <location>
        <position position="292"/>
    </location>
</feature>
<feature type="modified residue" description="Phosphoserine" evidence="3">
    <location>
        <position position="563"/>
    </location>
</feature>
<feature type="modified residue" description="N6-acetyllysine" evidence="3">
    <location>
        <position position="596"/>
    </location>
</feature>
<feature type="modified residue" description="N6-acetyllysine" evidence="3">
    <location>
        <position position="778"/>
    </location>
</feature>
<feature type="cross-link" description="Glycyl lysine isopeptide (Lys-Gly) (interchain with G-Cter in SUMO1); alternate" evidence="3">
    <location>
        <position position="114"/>
    </location>
</feature>
<feature type="cross-link" description="Glycyl lysine isopeptide (Lys-Gly) (interchain with G-Cter in SUMO2); alternate" evidence="3">
    <location>
        <position position="114"/>
    </location>
</feature>
<comment type="function">
    <text evidence="2 3">RNA helicase that acts as a sensor of the transcriptional status of both RNA polymerase (Pol) I and II: promotes ribosomal RNA (rRNA) processing and transcription from polymerase II (Pol II). Binds various RNAs, such as rRNAs, snoRNAs, 7SK and, at lower extent, mRNAs. In the nucleolus, localizes to rDNA locus, where it directly binds rRNAs and snoRNAs, and promotes rRNA transcription, processing and modification. Required for rRNA 2'-O-methylation, possibly by promoting the recruitment of late-acting snoRNAs SNORD56 and SNORD58 with pre-ribosomal complexes. In the nucleoplasm, binds 7SK RNA and is recruited to the promoters of Pol II-transcribed genes: acts by facilitating the release of P-TEFb from inhibitory 7SK snRNP in a manner that is dependent on its helicase activity, thereby promoting transcription of its target genes. Functions as a cofactor for JUN-activated transcription: required for phosphorylation of JUN at 'Ser-77'. Can unwind double-stranded RNA (helicase) and can fold or introduce a secondary structure to a single-stranded RNA (foldase). Together with SIRT7, required to prevent R-loop-associated DNA damage and transcription-associated genomic instability: deacetylation by SIRT7 activates the helicase activity, thereby overcoming R-loop-mediated stalling of RNA polymerases. Involved in rRNA processing. May bind to specific miRNA hairpins (By similarity). Component of a multi-helicase-TICAM1 complex that acts as a cytoplasmic sensor of viral double-stranded RNA (dsRNA) and plays a role in the activation of a cascade of antiviral responses including the induction of pro-inflammatory cytokines via the adapter molecule TICAM1 (By similarity).</text>
</comment>
<comment type="catalytic activity">
    <reaction evidence="3">
        <text>ATP + H2O = ADP + phosphate + H(+)</text>
        <dbReference type="Rhea" id="RHEA:13065"/>
        <dbReference type="ChEBI" id="CHEBI:15377"/>
        <dbReference type="ChEBI" id="CHEBI:15378"/>
        <dbReference type="ChEBI" id="CHEBI:30616"/>
        <dbReference type="ChEBI" id="CHEBI:43474"/>
        <dbReference type="ChEBI" id="CHEBI:456216"/>
        <dbReference type="EC" id="3.6.4.13"/>
    </reaction>
    <physiologicalReaction direction="left-to-right" evidence="3">
        <dbReference type="Rhea" id="RHEA:13066"/>
    </physiologicalReaction>
</comment>
<comment type="activity regulation">
    <text evidence="3">Acetylation inhibits the helicase activity.</text>
</comment>
<comment type="subunit">
    <text evidence="2 3">Homodimer; homodimerizes via its N-terminus. Found in a multi-helicase-TICAM1 complex at least composed of DHX36, DDX1, DDX21 and TICAM1; this complex exists in resting cells with or without poly(I:C) RNA ligand stimulation. Interacts (via C-terminus) with TICAM1 (via TIR domain). Interacts with DHX36 (via C-terminus); this interaction serves as bridges to TICAM1. Interacts (via C-terminus) with DDX1 (via B30.2/SPRY domain); this interaction serves as bridges to TICAM1 (By similarity). Component of the B-WICH complex, at least composed of SMARCA5/SNF2H, BAZ1B/WSTF, SF3B1, DEK, MYO1C, ERCC6, MYBBP1A and DDX21. Interacts with C1QBP. Interacts with JUN. Interacts with WDR46. Interacts with MCM3AP (By similarity). Interacts with WDR43 (By similarity). Interacts with KPNA3 (By similarity). Interacts with GID4 (By similarity).</text>
</comment>
<comment type="subcellular location">
    <subcellularLocation>
        <location evidence="3">Nucleus</location>
        <location evidence="3">Nucleolus</location>
    </subcellularLocation>
    <subcellularLocation>
        <location evidence="3">Nucleus</location>
        <location evidence="3">Nucleoplasm</location>
    </subcellularLocation>
    <subcellularLocation>
        <location evidence="2">Cytoplasm</location>
        <location evidence="2">Cytosol</location>
    </subcellularLocation>
    <subcellularLocation>
        <location evidence="2">Mitochondrion</location>
    </subcellularLocation>
    <text evidence="2 3">Present both in nucleolus and nucleoplasm. Interaction with JUN promotes translocation from the nucleolus to the nucleoplasm. Interaction with WDR46 is required for localization to the nucleolus. Colocalizes in the cytosol with DDX1, DHX36 and TICAM1. The multi-helicase-TICAM1 complex may translocate to the mitochondria upon poly(I:C) RNA ligand stimulation (By similarity).</text>
</comment>
<comment type="domain">
    <text evidence="3">The helicase and foldase activities reside in two separate domains, the helicase in the N-terminus and the foldase in the C-terminus.</text>
</comment>
<comment type="domain">
    <text evidence="1">The 3 X 5 AA repeats seem to be critical for the RNA folding activity.</text>
</comment>
<comment type="PTM">
    <text evidence="3">Acetylation by CREBBP/CBP inhibits the helicase activity. Deacetylation by SIRT7 promotes the helicase activity and overcomes R-loop-mediated stalling of RNA polymerases.</text>
</comment>
<comment type="similarity">
    <text evidence="8">Belongs to the DEAD box helicase family. DDX21/DDX50 subfamily.</text>
</comment>
<protein>
    <recommendedName>
        <fullName evidence="8">Nucleolar RNA helicase 2</fullName>
        <ecNumber evidence="3">3.6.4.13</ecNumber>
    </recommendedName>
    <alternativeName>
        <fullName>DEAD box protein 21</fullName>
    </alternativeName>
    <alternativeName>
        <fullName>Gu-alpha</fullName>
    </alternativeName>
    <alternativeName>
        <fullName>Nucleolar RNA helicase Gu</fullName>
    </alternativeName>
    <alternativeName>
        <fullName>Nucleolar RNA helicase II</fullName>
    </alternativeName>
    <alternativeName>
        <fullName>RH II/Gu</fullName>
    </alternativeName>
</protein>
<accession>Q3B8Q1</accession>
<evidence type="ECO:0000250" key="1"/>
<evidence type="ECO:0000250" key="2">
    <source>
        <dbReference type="UniProtKB" id="Q9JIK5"/>
    </source>
</evidence>
<evidence type="ECO:0000250" key="3">
    <source>
        <dbReference type="UniProtKB" id="Q9NR30"/>
    </source>
</evidence>
<evidence type="ECO:0000255" key="4">
    <source>
        <dbReference type="PROSITE-ProRule" id="PRU00541"/>
    </source>
</evidence>
<evidence type="ECO:0000255" key="5">
    <source>
        <dbReference type="PROSITE-ProRule" id="PRU00542"/>
    </source>
</evidence>
<evidence type="ECO:0000255" key="6">
    <source>
        <dbReference type="PROSITE-ProRule" id="PRU00552"/>
    </source>
</evidence>
<evidence type="ECO:0000256" key="7">
    <source>
        <dbReference type="SAM" id="MobiDB-lite"/>
    </source>
</evidence>
<evidence type="ECO:0000305" key="8"/>
<sequence length="782" mass="85966">MPGKLRSASKSESEGTEESMETLQKPSEKKTRKEKPKSKTDEATEGVEEAASSKVKAVKKKGPSEDDVGPPKSKKAKKQEEEPQDDPASKSKTSKKKKEPLEKKAPSAKTKEMKAEEPSEEEADAPKPKKTKKGKEANGDVGEKSPGLKNGLSHPKPDSSSTQAPGEESETEKEIPVEQKEGAFSNFPISEETVKLLKARGVNFLFPIQAKTFHHVYSGKDLIAQARTGTGKTFSFAIPLIEKLQGGLQERKRGRAPQVLVLAPTRELANQVSKDFSDITKKLSVACFYGGTPYGGQIERMRSGIDILVGTPGRIKDHLQNGKLDLTKLKHVVLDEVDQMLDMGFADQVEEILCVAYKKDSEDNPQTLLFSATCPHWVFNVAKKYMKSTYEQVDLIGKKTQKAAITVEHLAIKCHWTERAAVIGDVIRVYSGHQGRTIIFCETKKDAQELSQNTCIKQDAQSLHGDIPQKQREITLKGFRNGNFGVLVATNVAARGLDIPEVDLVVQSCPPKDVESYIHRSGRTGRAGRTGVCICFYQHKEEYQLAQVEQKAGIKFKRIGVPSATEIIKASSKDAIRLLDSVPPTAIGHFKQSAEKLIEEKGAVEALAAALAHISGATSVDQRSLINSQAGFVTMILRCSVEMPNISYAWKELKEQLGESIDAKVKGMVFLKGKLGVCFDVRTEAVTEIKEKWHDSRRWQLTVATEQPELEGPPEGYRGGRGQRDGSRGSFRGQRGGSRNFRGQGQRGGSRNFRGQRPGGGNKSNRSPNKGQKRSFSKAFGQ</sequence>
<name>DDX21_RAT</name>
<keyword id="KW-0007">Acetylation</keyword>
<keyword id="KW-0051">Antiviral defense</keyword>
<keyword id="KW-0067">ATP-binding</keyword>
<keyword id="KW-0963">Cytoplasm</keyword>
<keyword id="KW-0347">Helicase</keyword>
<keyword id="KW-0378">Hydrolase</keyword>
<keyword id="KW-0391">Immunity</keyword>
<keyword id="KW-0399">Innate immunity</keyword>
<keyword id="KW-1017">Isopeptide bond</keyword>
<keyword id="KW-0496">Mitochondrion</keyword>
<keyword id="KW-0547">Nucleotide-binding</keyword>
<keyword id="KW-0539">Nucleus</keyword>
<keyword id="KW-0597">Phosphoprotein</keyword>
<keyword id="KW-1185">Reference proteome</keyword>
<keyword id="KW-0677">Repeat</keyword>
<keyword id="KW-0694">RNA-binding</keyword>
<keyword id="KW-0698">rRNA processing</keyword>
<keyword id="KW-0804">Transcription</keyword>
<keyword id="KW-0832">Ubl conjugation</keyword>
<organism>
    <name type="scientific">Rattus norvegicus</name>
    <name type="common">Rat</name>
    <dbReference type="NCBI Taxonomy" id="10116"/>
    <lineage>
        <taxon>Eukaryota</taxon>
        <taxon>Metazoa</taxon>
        <taxon>Chordata</taxon>
        <taxon>Craniata</taxon>
        <taxon>Vertebrata</taxon>
        <taxon>Euteleostomi</taxon>
        <taxon>Mammalia</taxon>
        <taxon>Eutheria</taxon>
        <taxon>Euarchontoglires</taxon>
        <taxon>Glires</taxon>
        <taxon>Rodentia</taxon>
        <taxon>Myomorpha</taxon>
        <taxon>Muroidea</taxon>
        <taxon>Muridae</taxon>
        <taxon>Murinae</taxon>
        <taxon>Rattus</taxon>
    </lineage>
</organism>
<dbReference type="EC" id="3.6.4.13" evidence="3"/>
<dbReference type="EMBL" id="BC105878">
    <property type="protein sequence ID" value="AAI05879.1"/>
    <property type="molecule type" value="mRNA"/>
</dbReference>
<dbReference type="RefSeq" id="NP_001032278.1">
    <property type="nucleotide sequence ID" value="NM_001037201.1"/>
</dbReference>
<dbReference type="SMR" id="Q3B8Q1"/>
<dbReference type="BioGRID" id="261547">
    <property type="interactions" value="1"/>
</dbReference>
<dbReference type="FunCoup" id="Q3B8Q1">
    <property type="interactions" value="3335"/>
</dbReference>
<dbReference type="IntAct" id="Q3B8Q1">
    <property type="interactions" value="4"/>
</dbReference>
<dbReference type="STRING" id="10116.ENSRNOP00000063494"/>
<dbReference type="iPTMnet" id="Q3B8Q1"/>
<dbReference type="PhosphoSitePlus" id="Q3B8Q1"/>
<dbReference type="jPOST" id="Q3B8Q1"/>
<dbReference type="PaxDb" id="10116-ENSRNOP00000063494"/>
<dbReference type="Ensembl" id="ENSRNOT00000068184.2">
    <property type="protein sequence ID" value="ENSRNOP00000063494.1"/>
    <property type="gene ID" value="ENSRNOG00000043099.2"/>
</dbReference>
<dbReference type="GeneID" id="317399"/>
<dbReference type="KEGG" id="rno:317399"/>
<dbReference type="UCSC" id="RGD:1307306">
    <property type="organism name" value="rat"/>
</dbReference>
<dbReference type="AGR" id="RGD:1307306"/>
<dbReference type="CTD" id="9188"/>
<dbReference type="RGD" id="1307306">
    <property type="gene designation" value="Ddx21"/>
</dbReference>
<dbReference type="eggNOG" id="KOG0331">
    <property type="taxonomic scope" value="Eukaryota"/>
</dbReference>
<dbReference type="GeneTree" id="ENSGT00940000155043"/>
<dbReference type="HOGENOM" id="CLU_003041_20_0_1"/>
<dbReference type="InParanoid" id="Q3B8Q1"/>
<dbReference type="OMA" id="YSGFHGR"/>
<dbReference type="OrthoDB" id="4255at2759"/>
<dbReference type="PhylomeDB" id="Q3B8Q1"/>
<dbReference type="TreeFam" id="TF328622"/>
<dbReference type="Reactome" id="R-RNO-5250924">
    <property type="pathway name" value="B-WICH complex positively regulates rRNA expression"/>
</dbReference>
<dbReference type="Reactome" id="R-RNO-6791226">
    <property type="pathway name" value="Major pathway of rRNA processing in the nucleolus and cytosol"/>
</dbReference>
<dbReference type="PRO" id="PR:Q3B8Q1"/>
<dbReference type="Proteomes" id="UP000002494">
    <property type="component" value="Chromosome 20"/>
</dbReference>
<dbReference type="Bgee" id="ENSRNOG00000043099">
    <property type="expression patterns" value="Expressed in spleen and 18 other cell types or tissues"/>
</dbReference>
<dbReference type="GO" id="GO:0110016">
    <property type="term" value="C:B-WICH complex"/>
    <property type="evidence" value="ECO:0000266"/>
    <property type="project" value="RGD"/>
</dbReference>
<dbReference type="GO" id="GO:0005829">
    <property type="term" value="C:cytosol"/>
    <property type="evidence" value="ECO:0000250"/>
    <property type="project" value="UniProtKB"/>
</dbReference>
<dbReference type="GO" id="GO:0005739">
    <property type="term" value="C:mitochondrion"/>
    <property type="evidence" value="ECO:0007669"/>
    <property type="project" value="UniProtKB-SubCell"/>
</dbReference>
<dbReference type="GO" id="GO:0005730">
    <property type="term" value="C:nucleolus"/>
    <property type="evidence" value="ECO:0000250"/>
    <property type="project" value="UniProtKB"/>
</dbReference>
<dbReference type="GO" id="GO:0005654">
    <property type="term" value="C:nucleoplasm"/>
    <property type="evidence" value="ECO:0000250"/>
    <property type="project" value="UniProtKB"/>
</dbReference>
<dbReference type="GO" id="GO:0097322">
    <property type="term" value="F:7SK snRNA binding"/>
    <property type="evidence" value="ECO:0000250"/>
    <property type="project" value="UniProtKB"/>
</dbReference>
<dbReference type="GO" id="GO:0005524">
    <property type="term" value="F:ATP binding"/>
    <property type="evidence" value="ECO:0007669"/>
    <property type="project" value="UniProtKB-KW"/>
</dbReference>
<dbReference type="GO" id="GO:0016887">
    <property type="term" value="F:ATP hydrolysis activity"/>
    <property type="evidence" value="ECO:0007669"/>
    <property type="project" value="RHEA"/>
</dbReference>
<dbReference type="GO" id="GO:0003725">
    <property type="term" value="F:double-stranded RNA binding"/>
    <property type="evidence" value="ECO:0000266"/>
    <property type="project" value="RGD"/>
</dbReference>
<dbReference type="GO" id="GO:0042802">
    <property type="term" value="F:identical protein binding"/>
    <property type="evidence" value="ECO:0000266"/>
    <property type="project" value="RGD"/>
</dbReference>
<dbReference type="GO" id="GO:0035198">
    <property type="term" value="F:miRNA binding"/>
    <property type="evidence" value="ECO:0000250"/>
    <property type="project" value="UniProtKB"/>
</dbReference>
<dbReference type="GO" id="GO:0003729">
    <property type="term" value="F:mRNA binding"/>
    <property type="evidence" value="ECO:0000318"/>
    <property type="project" value="GO_Central"/>
</dbReference>
<dbReference type="GO" id="GO:0003724">
    <property type="term" value="F:RNA helicase activity"/>
    <property type="evidence" value="ECO:0000250"/>
    <property type="project" value="UniProtKB"/>
</dbReference>
<dbReference type="GO" id="GO:0019843">
    <property type="term" value="F:rRNA binding"/>
    <property type="evidence" value="ECO:0000250"/>
    <property type="project" value="UniProtKB"/>
</dbReference>
<dbReference type="GO" id="GO:0030515">
    <property type="term" value="F:snoRNA binding"/>
    <property type="evidence" value="ECO:0000250"/>
    <property type="project" value="UniProtKB"/>
</dbReference>
<dbReference type="GO" id="GO:0051607">
    <property type="term" value="P:defense response to virus"/>
    <property type="evidence" value="ECO:0007669"/>
    <property type="project" value="UniProtKB-KW"/>
</dbReference>
<dbReference type="GO" id="GO:0045087">
    <property type="term" value="P:innate immune response"/>
    <property type="evidence" value="ECO:0007669"/>
    <property type="project" value="UniProtKB-KW"/>
</dbReference>
<dbReference type="GO" id="GO:0043123">
    <property type="term" value="P:positive regulation of canonical NF-kappaB signal transduction"/>
    <property type="evidence" value="ECO:0000250"/>
    <property type="project" value="UniProtKB"/>
</dbReference>
<dbReference type="GO" id="GO:0002735">
    <property type="term" value="P:positive regulation of myeloid dendritic cell cytokine production"/>
    <property type="evidence" value="ECO:0000266"/>
    <property type="project" value="RGD"/>
</dbReference>
<dbReference type="GO" id="GO:0045945">
    <property type="term" value="P:positive regulation of transcription by RNA polymerase III"/>
    <property type="evidence" value="ECO:0000266"/>
    <property type="project" value="RGD"/>
</dbReference>
<dbReference type="GO" id="GO:0062176">
    <property type="term" value="P:R-loop processing"/>
    <property type="evidence" value="ECO:0000250"/>
    <property type="project" value="UniProtKB"/>
</dbReference>
<dbReference type="GO" id="GO:0043330">
    <property type="term" value="P:response to exogenous dsRNA"/>
    <property type="evidence" value="ECO:0000266"/>
    <property type="project" value="RGD"/>
</dbReference>
<dbReference type="GO" id="GO:0009615">
    <property type="term" value="P:response to virus"/>
    <property type="evidence" value="ECO:0000266"/>
    <property type="project" value="RGD"/>
</dbReference>
<dbReference type="GO" id="GO:0006364">
    <property type="term" value="P:rRNA processing"/>
    <property type="evidence" value="ECO:0007669"/>
    <property type="project" value="UniProtKB-KW"/>
</dbReference>
<dbReference type="GO" id="GO:0006366">
    <property type="term" value="P:transcription by RNA polymerase II"/>
    <property type="evidence" value="ECO:0000250"/>
    <property type="project" value="UniProtKB"/>
</dbReference>
<dbReference type="CDD" id="cd17944">
    <property type="entry name" value="DEADc_DDX21_DDX50"/>
    <property type="match status" value="1"/>
</dbReference>
<dbReference type="CDD" id="cd12936">
    <property type="entry name" value="GUCT_RHII_Gualpha_beta"/>
    <property type="match status" value="1"/>
</dbReference>
<dbReference type="CDD" id="cd18787">
    <property type="entry name" value="SF2_C_DEAD"/>
    <property type="match status" value="1"/>
</dbReference>
<dbReference type="FunFam" id="3.40.50.300:FF:000666">
    <property type="entry name" value="ATP-dependent RNA helicase DDX50"/>
    <property type="match status" value="1"/>
</dbReference>
<dbReference type="FunFam" id="3.30.70.2280:FF:000002">
    <property type="entry name" value="Nucleolar RNA helicase 2"/>
    <property type="match status" value="1"/>
</dbReference>
<dbReference type="FunFam" id="3.40.50.300:FF:001168">
    <property type="entry name" value="nucleolar RNA helicase 2"/>
    <property type="match status" value="1"/>
</dbReference>
<dbReference type="Gene3D" id="3.30.70.2280">
    <property type="match status" value="1"/>
</dbReference>
<dbReference type="Gene3D" id="3.40.50.300">
    <property type="entry name" value="P-loop containing nucleotide triphosphate hydrolases"/>
    <property type="match status" value="2"/>
</dbReference>
<dbReference type="InterPro" id="IPR011545">
    <property type="entry name" value="DEAD/DEAH_box_helicase_dom"/>
</dbReference>
<dbReference type="InterPro" id="IPR050547">
    <property type="entry name" value="DEAD_box_RNA_helicases"/>
</dbReference>
<dbReference type="InterPro" id="IPR012562">
    <property type="entry name" value="GUCT"/>
</dbReference>
<dbReference type="InterPro" id="IPR014001">
    <property type="entry name" value="Helicase_ATP-bd"/>
</dbReference>
<dbReference type="InterPro" id="IPR001650">
    <property type="entry name" value="Helicase_C-like"/>
</dbReference>
<dbReference type="InterPro" id="IPR027417">
    <property type="entry name" value="P-loop_NTPase"/>
</dbReference>
<dbReference type="InterPro" id="IPR035979">
    <property type="entry name" value="RBD_domain_sf"/>
</dbReference>
<dbReference type="PANTHER" id="PTHR47963:SF8">
    <property type="entry name" value="ATP-DEPENDENT RNA HELICASE DEAD"/>
    <property type="match status" value="1"/>
</dbReference>
<dbReference type="PANTHER" id="PTHR47963">
    <property type="entry name" value="DEAD-BOX ATP-DEPENDENT RNA HELICASE 47, MITOCHONDRIAL"/>
    <property type="match status" value="1"/>
</dbReference>
<dbReference type="Pfam" id="PF00270">
    <property type="entry name" value="DEAD"/>
    <property type="match status" value="1"/>
</dbReference>
<dbReference type="Pfam" id="PF08152">
    <property type="entry name" value="GUCT"/>
    <property type="match status" value="1"/>
</dbReference>
<dbReference type="Pfam" id="PF00271">
    <property type="entry name" value="Helicase_C"/>
    <property type="match status" value="1"/>
</dbReference>
<dbReference type="SMART" id="SM00487">
    <property type="entry name" value="DEXDc"/>
    <property type="match status" value="1"/>
</dbReference>
<dbReference type="SMART" id="SM00490">
    <property type="entry name" value="HELICc"/>
    <property type="match status" value="1"/>
</dbReference>
<dbReference type="SUPFAM" id="SSF52540">
    <property type="entry name" value="P-loop containing nucleoside triphosphate hydrolases"/>
    <property type="match status" value="1"/>
</dbReference>
<dbReference type="SUPFAM" id="SSF54928">
    <property type="entry name" value="RNA-binding domain, RBD"/>
    <property type="match status" value="1"/>
</dbReference>
<dbReference type="PROSITE" id="PS51192">
    <property type="entry name" value="HELICASE_ATP_BIND_1"/>
    <property type="match status" value="1"/>
</dbReference>
<dbReference type="PROSITE" id="PS51194">
    <property type="entry name" value="HELICASE_CTER"/>
    <property type="match status" value="1"/>
</dbReference>
<dbReference type="PROSITE" id="PS51195">
    <property type="entry name" value="Q_MOTIF"/>
    <property type="match status" value="1"/>
</dbReference>
<reference key="1">
    <citation type="journal article" date="2004" name="Genome Res.">
        <title>The status, quality, and expansion of the NIH full-length cDNA project: the Mammalian Gene Collection (MGC).</title>
        <authorList>
            <consortium name="The MGC Project Team"/>
        </authorList>
    </citation>
    <scope>NUCLEOTIDE SEQUENCE [LARGE SCALE MRNA]</scope>
    <source>
        <tissue>Kidney</tissue>
    </source>
</reference>
<gene>
    <name type="primary">Ddx21</name>
    <name type="synonym">Ddx21a</name>
</gene>